<reference key="1">
    <citation type="journal article" date="2010" name="Genome Biol.">
        <title>Structure and dynamics of the pan-genome of Streptococcus pneumoniae and closely related species.</title>
        <authorList>
            <person name="Donati C."/>
            <person name="Hiller N.L."/>
            <person name="Tettelin H."/>
            <person name="Muzzi A."/>
            <person name="Croucher N.J."/>
            <person name="Angiuoli S.V."/>
            <person name="Oggioni M."/>
            <person name="Dunning Hotopp J.C."/>
            <person name="Hu F.Z."/>
            <person name="Riley D.R."/>
            <person name="Covacci A."/>
            <person name="Mitchell T.J."/>
            <person name="Bentley S.D."/>
            <person name="Kilian M."/>
            <person name="Ehrlich G.D."/>
            <person name="Rappuoli R."/>
            <person name="Moxon E.R."/>
            <person name="Masignani V."/>
        </authorList>
    </citation>
    <scope>NUCLEOTIDE SEQUENCE [LARGE SCALE GENOMIC DNA]</scope>
    <source>
        <strain>JJA</strain>
    </source>
</reference>
<proteinExistence type="inferred from homology"/>
<protein>
    <recommendedName>
        <fullName evidence="1">UDP-N-acetylmuramate--L-alanine ligase</fullName>
        <ecNumber evidence="1">6.3.2.8</ecNumber>
    </recommendedName>
    <alternativeName>
        <fullName evidence="1">UDP-N-acetylmuramoyl-L-alanine synthetase</fullName>
    </alternativeName>
</protein>
<comment type="function">
    <text evidence="1">Cell wall formation.</text>
</comment>
<comment type="catalytic activity">
    <reaction evidence="1">
        <text>UDP-N-acetyl-alpha-D-muramate + L-alanine + ATP = UDP-N-acetyl-alpha-D-muramoyl-L-alanine + ADP + phosphate + H(+)</text>
        <dbReference type="Rhea" id="RHEA:23372"/>
        <dbReference type="ChEBI" id="CHEBI:15378"/>
        <dbReference type="ChEBI" id="CHEBI:30616"/>
        <dbReference type="ChEBI" id="CHEBI:43474"/>
        <dbReference type="ChEBI" id="CHEBI:57972"/>
        <dbReference type="ChEBI" id="CHEBI:70757"/>
        <dbReference type="ChEBI" id="CHEBI:83898"/>
        <dbReference type="ChEBI" id="CHEBI:456216"/>
        <dbReference type="EC" id="6.3.2.8"/>
    </reaction>
</comment>
<comment type="pathway">
    <text evidence="1">Cell wall biogenesis; peptidoglycan biosynthesis.</text>
</comment>
<comment type="subcellular location">
    <subcellularLocation>
        <location evidence="1">Cytoplasm</location>
    </subcellularLocation>
</comment>
<comment type="similarity">
    <text evidence="1">Belongs to the MurCDEF family.</text>
</comment>
<dbReference type="EC" id="6.3.2.8" evidence="1"/>
<dbReference type="EMBL" id="CP000919">
    <property type="protein sequence ID" value="ACO19200.1"/>
    <property type="molecule type" value="Genomic_DNA"/>
</dbReference>
<dbReference type="RefSeq" id="WP_000048113.1">
    <property type="nucleotide sequence ID" value="NC_012466.1"/>
</dbReference>
<dbReference type="SMR" id="C1CFA5"/>
<dbReference type="KEGG" id="sjj:SPJ_1424"/>
<dbReference type="HOGENOM" id="CLU_028104_1_0_9"/>
<dbReference type="UniPathway" id="UPA00219"/>
<dbReference type="Proteomes" id="UP000002206">
    <property type="component" value="Chromosome"/>
</dbReference>
<dbReference type="GO" id="GO:0005737">
    <property type="term" value="C:cytoplasm"/>
    <property type="evidence" value="ECO:0007669"/>
    <property type="project" value="UniProtKB-SubCell"/>
</dbReference>
<dbReference type="GO" id="GO:0005524">
    <property type="term" value="F:ATP binding"/>
    <property type="evidence" value="ECO:0007669"/>
    <property type="project" value="UniProtKB-UniRule"/>
</dbReference>
<dbReference type="GO" id="GO:0008763">
    <property type="term" value="F:UDP-N-acetylmuramate-L-alanine ligase activity"/>
    <property type="evidence" value="ECO:0007669"/>
    <property type="project" value="UniProtKB-UniRule"/>
</dbReference>
<dbReference type="GO" id="GO:0051301">
    <property type="term" value="P:cell division"/>
    <property type="evidence" value="ECO:0007669"/>
    <property type="project" value="UniProtKB-KW"/>
</dbReference>
<dbReference type="GO" id="GO:0071555">
    <property type="term" value="P:cell wall organization"/>
    <property type="evidence" value="ECO:0007669"/>
    <property type="project" value="UniProtKB-KW"/>
</dbReference>
<dbReference type="GO" id="GO:0009252">
    <property type="term" value="P:peptidoglycan biosynthetic process"/>
    <property type="evidence" value="ECO:0007669"/>
    <property type="project" value="UniProtKB-UniRule"/>
</dbReference>
<dbReference type="GO" id="GO:0008360">
    <property type="term" value="P:regulation of cell shape"/>
    <property type="evidence" value="ECO:0007669"/>
    <property type="project" value="UniProtKB-KW"/>
</dbReference>
<dbReference type="Gene3D" id="3.90.190.20">
    <property type="entry name" value="Mur ligase, C-terminal domain"/>
    <property type="match status" value="1"/>
</dbReference>
<dbReference type="Gene3D" id="3.40.1190.10">
    <property type="entry name" value="Mur-like, catalytic domain"/>
    <property type="match status" value="1"/>
</dbReference>
<dbReference type="Gene3D" id="3.40.50.720">
    <property type="entry name" value="NAD(P)-binding Rossmann-like Domain"/>
    <property type="match status" value="1"/>
</dbReference>
<dbReference type="HAMAP" id="MF_00046">
    <property type="entry name" value="MurC"/>
    <property type="match status" value="1"/>
</dbReference>
<dbReference type="InterPro" id="IPR036565">
    <property type="entry name" value="Mur-like_cat_sf"/>
</dbReference>
<dbReference type="InterPro" id="IPR004101">
    <property type="entry name" value="Mur_ligase_C"/>
</dbReference>
<dbReference type="InterPro" id="IPR036615">
    <property type="entry name" value="Mur_ligase_C_dom_sf"/>
</dbReference>
<dbReference type="InterPro" id="IPR013221">
    <property type="entry name" value="Mur_ligase_cen"/>
</dbReference>
<dbReference type="InterPro" id="IPR000713">
    <property type="entry name" value="Mur_ligase_N"/>
</dbReference>
<dbReference type="InterPro" id="IPR050061">
    <property type="entry name" value="MurCDEF_pg_biosynth"/>
</dbReference>
<dbReference type="InterPro" id="IPR005758">
    <property type="entry name" value="UDP-N-AcMur_Ala_ligase_MurC"/>
</dbReference>
<dbReference type="NCBIfam" id="TIGR01082">
    <property type="entry name" value="murC"/>
    <property type="match status" value="1"/>
</dbReference>
<dbReference type="PANTHER" id="PTHR43445:SF3">
    <property type="entry name" value="UDP-N-ACETYLMURAMATE--L-ALANINE LIGASE"/>
    <property type="match status" value="1"/>
</dbReference>
<dbReference type="PANTHER" id="PTHR43445">
    <property type="entry name" value="UDP-N-ACETYLMURAMATE--L-ALANINE LIGASE-RELATED"/>
    <property type="match status" value="1"/>
</dbReference>
<dbReference type="Pfam" id="PF01225">
    <property type="entry name" value="Mur_ligase"/>
    <property type="match status" value="1"/>
</dbReference>
<dbReference type="Pfam" id="PF02875">
    <property type="entry name" value="Mur_ligase_C"/>
    <property type="match status" value="1"/>
</dbReference>
<dbReference type="Pfam" id="PF08245">
    <property type="entry name" value="Mur_ligase_M"/>
    <property type="match status" value="1"/>
</dbReference>
<dbReference type="SUPFAM" id="SSF51984">
    <property type="entry name" value="MurCD N-terminal domain"/>
    <property type="match status" value="1"/>
</dbReference>
<dbReference type="SUPFAM" id="SSF53623">
    <property type="entry name" value="MurD-like peptide ligases, catalytic domain"/>
    <property type="match status" value="1"/>
</dbReference>
<dbReference type="SUPFAM" id="SSF53244">
    <property type="entry name" value="MurD-like peptide ligases, peptide-binding domain"/>
    <property type="match status" value="1"/>
</dbReference>
<evidence type="ECO:0000255" key="1">
    <source>
        <dbReference type="HAMAP-Rule" id="MF_00046"/>
    </source>
</evidence>
<name>MURC_STRZJ</name>
<sequence>MSKTYHFIGIKGSGMSALALMLYQMGHKVQGSDVEKYYFTQRGLEQAGITILPFDEKNLDGDMEIIAGNAFRPDNNVEIAYADQNGISYKRYHEFLGSFMRDFVSMGVAGAHGKTSTTGMLSHVLSHITDTSFLIGDGTGRGSANAKYFVFESDEYERHFMPYHPEYSIITNIDFDHPDYFTSLEDVFNAFNDYAKQITKGLFVYGEDAELRKITSDAPIYYYGFEAEGNDFVASDLLRSTTGSTFTVHFRGQNLGQFHIPTFGRHNIMNATAVIGLLYTAGFDLNLVREHLKTFSGVKRRFTEKIVNDTVIIDDFAHHPTEIIATLDAARQKYPSKEIVAVFQPHTFTRTIALLDDFAHALNQADAVYLAQIYGSAREVDHGDVKVEDLANKINKKHQVITVENVSPLLDHDNAVYVFMGAGDIQTYEYSFERLLSNLTSNVQ</sequence>
<keyword id="KW-0067">ATP-binding</keyword>
<keyword id="KW-0131">Cell cycle</keyword>
<keyword id="KW-0132">Cell division</keyword>
<keyword id="KW-0133">Cell shape</keyword>
<keyword id="KW-0961">Cell wall biogenesis/degradation</keyword>
<keyword id="KW-0963">Cytoplasm</keyword>
<keyword id="KW-0436">Ligase</keyword>
<keyword id="KW-0547">Nucleotide-binding</keyword>
<keyword id="KW-0573">Peptidoglycan synthesis</keyword>
<organism>
    <name type="scientific">Streptococcus pneumoniae (strain JJA)</name>
    <dbReference type="NCBI Taxonomy" id="488222"/>
    <lineage>
        <taxon>Bacteria</taxon>
        <taxon>Bacillati</taxon>
        <taxon>Bacillota</taxon>
        <taxon>Bacilli</taxon>
        <taxon>Lactobacillales</taxon>
        <taxon>Streptococcaceae</taxon>
        <taxon>Streptococcus</taxon>
    </lineage>
</organism>
<accession>C1CFA5</accession>
<feature type="chain" id="PRO_1000192115" description="UDP-N-acetylmuramate--L-alanine ligase">
    <location>
        <begin position="1"/>
        <end position="444"/>
    </location>
</feature>
<feature type="binding site" evidence="1">
    <location>
        <begin position="110"/>
        <end position="116"/>
    </location>
    <ligand>
        <name>ATP</name>
        <dbReference type="ChEBI" id="CHEBI:30616"/>
    </ligand>
</feature>
<gene>
    <name evidence="1" type="primary">murC</name>
    <name type="ordered locus">SPJ_1424</name>
</gene>